<feature type="chain" id="PRO_1000118320" description="Heat-inducible transcription repressor HrcA">
    <location>
        <begin position="1"/>
        <end position="344"/>
    </location>
</feature>
<name>HRCA_STRZJ</name>
<sequence length="344" mass="39368">MVTERQQDILNLIIDIFTKTHEPVGSKALQESINSSSATIRNDMAELEKQGLLEKAHTSSGRMPSVAGFQYYVKHSLDFDRLAENEVYEIVKAFDQEFFKLEDILQEAANLLTDLSGCTVVALDVEPSRQRLTAFDIVVLGQHTALAVFTLDESRTVTSQFLIPRNFLQEDLLKLKSIIQERFLGHTVLDIHYKIRTEIPQIIQRYFTTTDNVIDLFEHIFKEMFNENIVMAGKVNLLNFANLAAYQFFDQPQKVALEIREGLREDQMQNVRVADGQESCLADLAVISSKFLIPYRGVGILAIIGPVNLDYQQLINQINVVNRVLTMKLTDFYRYLSSNHYEVH</sequence>
<keyword id="KW-0678">Repressor</keyword>
<keyword id="KW-0346">Stress response</keyword>
<keyword id="KW-0804">Transcription</keyword>
<keyword id="KW-0805">Transcription regulation</keyword>
<evidence type="ECO:0000255" key="1">
    <source>
        <dbReference type="HAMAP-Rule" id="MF_00081"/>
    </source>
</evidence>
<comment type="function">
    <text evidence="1">Negative regulator of class I heat shock genes (grpE-dnaK-dnaJ and groELS operons). Prevents heat-shock induction of these operons.</text>
</comment>
<comment type="similarity">
    <text evidence="1">Belongs to the HrcA family.</text>
</comment>
<protein>
    <recommendedName>
        <fullName evidence="1">Heat-inducible transcription repressor HrcA</fullName>
    </recommendedName>
</protein>
<reference key="1">
    <citation type="journal article" date="2010" name="Genome Biol.">
        <title>Structure and dynamics of the pan-genome of Streptococcus pneumoniae and closely related species.</title>
        <authorList>
            <person name="Donati C."/>
            <person name="Hiller N.L."/>
            <person name="Tettelin H."/>
            <person name="Muzzi A."/>
            <person name="Croucher N.J."/>
            <person name="Angiuoli S.V."/>
            <person name="Oggioni M."/>
            <person name="Dunning Hotopp J.C."/>
            <person name="Hu F.Z."/>
            <person name="Riley D.R."/>
            <person name="Covacci A."/>
            <person name="Mitchell T.J."/>
            <person name="Bentley S.D."/>
            <person name="Kilian M."/>
            <person name="Ehrlich G.D."/>
            <person name="Rappuoli R."/>
            <person name="Moxon E.R."/>
            <person name="Masignani V."/>
        </authorList>
    </citation>
    <scope>NUCLEOTIDE SEQUENCE [LARGE SCALE GENOMIC DNA]</scope>
    <source>
        <strain>JJA</strain>
    </source>
</reference>
<organism>
    <name type="scientific">Streptococcus pneumoniae (strain JJA)</name>
    <dbReference type="NCBI Taxonomy" id="488222"/>
    <lineage>
        <taxon>Bacteria</taxon>
        <taxon>Bacillati</taxon>
        <taxon>Bacillota</taxon>
        <taxon>Bacilli</taxon>
        <taxon>Lactobacillales</taxon>
        <taxon>Streptococcaceae</taxon>
        <taxon>Streptococcus</taxon>
    </lineage>
</organism>
<accession>C1CCQ6</accession>
<dbReference type="EMBL" id="CP000919">
    <property type="protein sequence ID" value="ACO19822.1"/>
    <property type="molecule type" value="Genomic_DNA"/>
</dbReference>
<dbReference type="RefSeq" id="WP_000255770.1">
    <property type="nucleotide sequence ID" value="NC_012466.1"/>
</dbReference>
<dbReference type="SMR" id="C1CCQ6"/>
<dbReference type="KEGG" id="sjj:SPJ_0481"/>
<dbReference type="HOGENOM" id="CLU_050019_1_0_9"/>
<dbReference type="Proteomes" id="UP000002206">
    <property type="component" value="Chromosome"/>
</dbReference>
<dbReference type="GO" id="GO:0003677">
    <property type="term" value="F:DNA binding"/>
    <property type="evidence" value="ECO:0007669"/>
    <property type="project" value="InterPro"/>
</dbReference>
<dbReference type="GO" id="GO:0045892">
    <property type="term" value="P:negative regulation of DNA-templated transcription"/>
    <property type="evidence" value="ECO:0007669"/>
    <property type="project" value="UniProtKB-UniRule"/>
</dbReference>
<dbReference type="Gene3D" id="3.30.450.40">
    <property type="match status" value="1"/>
</dbReference>
<dbReference type="Gene3D" id="3.30.390.60">
    <property type="entry name" value="Heat-inducible transcription repressor hrca homolog, domain 3"/>
    <property type="match status" value="1"/>
</dbReference>
<dbReference type="Gene3D" id="1.10.10.10">
    <property type="entry name" value="Winged helix-like DNA-binding domain superfamily/Winged helix DNA-binding domain"/>
    <property type="match status" value="1"/>
</dbReference>
<dbReference type="HAMAP" id="MF_00081">
    <property type="entry name" value="HrcA"/>
    <property type="match status" value="1"/>
</dbReference>
<dbReference type="InterPro" id="IPR029016">
    <property type="entry name" value="GAF-like_dom_sf"/>
</dbReference>
<dbReference type="InterPro" id="IPR002571">
    <property type="entry name" value="HrcA"/>
</dbReference>
<dbReference type="InterPro" id="IPR021153">
    <property type="entry name" value="HrcA_C"/>
</dbReference>
<dbReference type="InterPro" id="IPR036388">
    <property type="entry name" value="WH-like_DNA-bd_sf"/>
</dbReference>
<dbReference type="InterPro" id="IPR036390">
    <property type="entry name" value="WH_DNA-bd_sf"/>
</dbReference>
<dbReference type="InterPro" id="IPR005104">
    <property type="entry name" value="WHTH_HrcA_DNA-bd"/>
</dbReference>
<dbReference type="InterPro" id="IPR023120">
    <property type="entry name" value="WHTH_transcript_rep_HrcA_IDD"/>
</dbReference>
<dbReference type="NCBIfam" id="TIGR00331">
    <property type="entry name" value="hrcA"/>
    <property type="match status" value="1"/>
</dbReference>
<dbReference type="PANTHER" id="PTHR34824">
    <property type="entry name" value="HEAT-INDUCIBLE TRANSCRIPTION REPRESSOR HRCA"/>
    <property type="match status" value="1"/>
</dbReference>
<dbReference type="PANTHER" id="PTHR34824:SF1">
    <property type="entry name" value="HEAT-INDUCIBLE TRANSCRIPTION REPRESSOR HRCA"/>
    <property type="match status" value="1"/>
</dbReference>
<dbReference type="Pfam" id="PF01628">
    <property type="entry name" value="HrcA"/>
    <property type="match status" value="1"/>
</dbReference>
<dbReference type="Pfam" id="PF03444">
    <property type="entry name" value="HrcA_DNA-bdg"/>
    <property type="match status" value="1"/>
</dbReference>
<dbReference type="PIRSF" id="PIRSF005485">
    <property type="entry name" value="HrcA"/>
    <property type="match status" value="1"/>
</dbReference>
<dbReference type="SUPFAM" id="SSF55781">
    <property type="entry name" value="GAF domain-like"/>
    <property type="match status" value="1"/>
</dbReference>
<dbReference type="SUPFAM" id="SSF46785">
    <property type="entry name" value="Winged helix' DNA-binding domain"/>
    <property type="match status" value="1"/>
</dbReference>
<gene>
    <name evidence="1" type="primary">hrcA</name>
    <name type="ordered locus">SPJ_0481</name>
</gene>
<proteinExistence type="inferred from homology"/>